<evidence type="ECO:0000255" key="1">
    <source>
        <dbReference type="HAMAP-Rule" id="MF_00461"/>
    </source>
</evidence>
<evidence type="ECO:0000269" key="2">
    <source>
    </source>
</evidence>
<evidence type="ECO:0000269" key="3">
    <source>
    </source>
</evidence>
<evidence type="ECO:0000269" key="4">
    <source>
    </source>
</evidence>
<evidence type="ECO:0000303" key="5">
    <source>
    </source>
</evidence>
<evidence type="ECO:0000305" key="6"/>
<evidence type="ECO:0000305" key="7">
    <source>
    </source>
</evidence>
<evidence type="ECO:0000312" key="8">
    <source>
        <dbReference type="EMBL" id="AFA48980.1"/>
    </source>
</evidence>
<dbReference type="EC" id="7.2.1.2" evidence="3 4"/>
<dbReference type="EMBL" id="FJ416148">
    <property type="protein sequence ID" value="ACR23742.1"/>
    <property type="molecule type" value="Genomic_DNA"/>
</dbReference>
<dbReference type="EMBL" id="CP002987">
    <property type="protein sequence ID" value="AFA48980.1"/>
    <property type="molecule type" value="Genomic_DNA"/>
</dbReference>
<dbReference type="RefSeq" id="WP_014356580.1">
    <property type="nucleotide sequence ID" value="NC_016894.1"/>
</dbReference>
<dbReference type="PDB" id="9ERI">
    <property type="method" value="EM"/>
    <property type="resolution" value="3.30 A"/>
    <property type="chains" value="C=1-443"/>
</dbReference>
<dbReference type="PDB" id="9ERJ">
    <property type="method" value="EM"/>
    <property type="resolution" value="2.90 A"/>
    <property type="chains" value="C=1-443"/>
</dbReference>
<dbReference type="PDB" id="9ERK">
    <property type="method" value="EM"/>
    <property type="resolution" value="2.80 A"/>
    <property type="chains" value="C=1-443"/>
</dbReference>
<dbReference type="PDB" id="9ERL">
    <property type="method" value="EM"/>
    <property type="resolution" value="3.00 A"/>
    <property type="chains" value="C=1-443"/>
</dbReference>
<dbReference type="PDBsum" id="9ERI"/>
<dbReference type="PDBsum" id="9ERJ"/>
<dbReference type="PDBsum" id="9ERK"/>
<dbReference type="PDBsum" id="9ERL"/>
<dbReference type="EMDB" id="EMD-19915"/>
<dbReference type="EMDB" id="EMD-19916"/>
<dbReference type="EMDB" id="EMD-19919"/>
<dbReference type="EMDB" id="EMD-19920"/>
<dbReference type="SMR" id="H6LC32"/>
<dbReference type="STRING" id="931626.Awo_c22060"/>
<dbReference type="TCDB" id="3.D.6.1.2">
    <property type="family name" value="the ion (h(+) or na(+))-translocating nadh:ferredoxin oxidoreductase (nfo or rnf) family"/>
</dbReference>
<dbReference type="KEGG" id="awo:Awo_c22060"/>
<dbReference type="eggNOG" id="COG4656">
    <property type="taxonomic scope" value="Bacteria"/>
</dbReference>
<dbReference type="HOGENOM" id="CLU_010808_6_0_9"/>
<dbReference type="OrthoDB" id="9767754at2"/>
<dbReference type="BioCyc" id="MetaCyc:MONOMER-21341"/>
<dbReference type="BRENDA" id="7.2.1.2">
    <property type="organism ID" value="52"/>
</dbReference>
<dbReference type="Proteomes" id="UP000007177">
    <property type="component" value="Chromosome"/>
</dbReference>
<dbReference type="GO" id="GO:0005886">
    <property type="term" value="C:plasma membrane"/>
    <property type="evidence" value="ECO:0000314"/>
    <property type="project" value="CACAO"/>
</dbReference>
<dbReference type="GO" id="GO:0051539">
    <property type="term" value="F:4 iron, 4 sulfur cluster binding"/>
    <property type="evidence" value="ECO:0007669"/>
    <property type="project" value="UniProtKB-KW"/>
</dbReference>
<dbReference type="GO" id="GO:0009055">
    <property type="term" value="F:electron transfer activity"/>
    <property type="evidence" value="ECO:0007669"/>
    <property type="project" value="InterPro"/>
</dbReference>
<dbReference type="GO" id="GO:0046872">
    <property type="term" value="F:metal ion binding"/>
    <property type="evidence" value="ECO:0007669"/>
    <property type="project" value="UniProtKB-KW"/>
</dbReference>
<dbReference type="GO" id="GO:0022900">
    <property type="term" value="P:electron transport chain"/>
    <property type="evidence" value="ECO:0007669"/>
    <property type="project" value="UniProtKB-UniRule"/>
</dbReference>
<dbReference type="FunFam" id="3.40.50.11540:FF:000004">
    <property type="entry name" value="Ion-translocating oxidoreductase complex subunit C"/>
    <property type="match status" value="1"/>
</dbReference>
<dbReference type="Gene3D" id="3.10.20.600">
    <property type="match status" value="1"/>
</dbReference>
<dbReference type="Gene3D" id="3.30.70.20">
    <property type="match status" value="1"/>
</dbReference>
<dbReference type="Gene3D" id="3.40.50.11540">
    <property type="entry name" value="NADH-ubiquinone oxidoreductase 51kDa subunit"/>
    <property type="match status" value="1"/>
</dbReference>
<dbReference type="HAMAP" id="MF_00461">
    <property type="entry name" value="RsxC_RnfC"/>
    <property type="match status" value="1"/>
</dbReference>
<dbReference type="InterPro" id="IPR017896">
    <property type="entry name" value="4Fe4S_Fe-S-bd"/>
</dbReference>
<dbReference type="InterPro" id="IPR017900">
    <property type="entry name" value="4Fe4S_Fe_S_CS"/>
</dbReference>
<dbReference type="InterPro" id="IPR010208">
    <property type="entry name" value="Ion_transpt_RnfC/RsxC"/>
</dbReference>
<dbReference type="InterPro" id="IPR011538">
    <property type="entry name" value="Nuo51_FMN-bd"/>
</dbReference>
<dbReference type="InterPro" id="IPR037225">
    <property type="entry name" value="Nuo51_FMN-bd_sf"/>
</dbReference>
<dbReference type="InterPro" id="IPR026902">
    <property type="entry name" value="RnfC_N"/>
</dbReference>
<dbReference type="InterPro" id="IPR019554">
    <property type="entry name" value="Soluble_ligand-bd"/>
</dbReference>
<dbReference type="NCBIfam" id="NF003454">
    <property type="entry name" value="PRK05035.1"/>
    <property type="match status" value="1"/>
</dbReference>
<dbReference type="NCBIfam" id="TIGR01945">
    <property type="entry name" value="rnfC"/>
    <property type="match status" value="1"/>
</dbReference>
<dbReference type="PANTHER" id="PTHR43034">
    <property type="entry name" value="ION-TRANSLOCATING OXIDOREDUCTASE COMPLEX SUBUNIT C"/>
    <property type="match status" value="1"/>
</dbReference>
<dbReference type="PANTHER" id="PTHR43034:SF2">
    <property type="entry name" value="ION-TRANSLOCATING OXIDOREDUCTASE COMPLEX SUBUNIT C"/>
    <property type="match status" value="1"/>
</dbReference>
<dbReference type="Pfam" id="PF01512">
    <property type="entry name" value="Complex1_51K"/>
    <property type="match status" value="1"/>
</dbReference>
<dbReference type="Pfam" id="PF13237">
    <property type="entry name" value="Fer4_10"/>
    <property type="match status" value="1"/>
</dbReference>
<dbReference type="Pfam" id="PF13375">
    <property type="entry name" value="RnfC_N"/>
    <property type="match status" value="1"/>
</dbReference>
<dbReference type="Pfam" id="PF10531">
    <property type="entry name" value="SLBB"/>
    <property type="match status" value="1"/>
</dbReference>
<dbReference type="SUPFAM" id="SSF46548">
    <property type="entry name" value="alpha-helical ferredoxin"/>
    <property type="match status" value="1"/>
</dbReference>
<dbReference type="SUPFAM" id="SSF142019">
    <property type="entry name" value="Nqo1 FMN-binding domain-like"/>
    <property type="match status" value="1"/>
</dbReference>
<dbReference type="PROSITE" id="PS00198">
    <property type="entry name" value="4FE4S_FER_1"/>
    <property type="match status" value="2"/>
</dbReference>
<dbReference type="PROSITE" id="PS51379">
    <property type="entry name" value="4FE4S_FER_2"/>
    <property type="match status" value="2"/>
</dbReference>
<protein>
    <recommendedName>
        <fullName evidence="6">Na(+)-translocating ferredoxin:NAD(+) oxidoreductase complex subunit C</fullName>
        <ecNumber evidence="3 4">7.2.1.2</ecNumber>
    </recommendedName>
    <alternativeName>
        <fullName evidence="1 6">Rnf electron transport complex subunit C</fullName>
    </alternativeName>
</protein>
<sequence length="443" mass="47120">MNVKHGTFKGGIHPPYRKESTAEVPLGFGKKPEMVIIPMSLHIGAPCTPIVKKGDTVFLGQRVGEPNGFVSVPVHASVSGKVIAVEERPHASGDRVMSVVIESDGLDTIDPSIKPYGTLEDMDADAIKKMVLNAGIVGLGGATFPTHVKLAIPPDKKVDCVVLNGAECEPYLTADHHLMTSQAEKVVMGLKLAMKSVGVEKGFIGVEDNKTDAIEALVKAIGNDSRLEVYSLHTKYPQGAEKQLIAAITGREVPSGALPADAGVVVMNVGTAAQIAESMITGLPLYKRYLTCTGDAIKNPQTIEIRIGVPFQSVIDQCGGFSSEPGKVISGGPMMGVTQFVTDIPVMKGTSGILCLTKESAKIATPSNCIHCGKCVGVCPIHLQPLNIAEYSQRNMWDKCESNNAMDCIECGSCSYICPAKRTLVSSIRVAKREIIAQRRKGN</sequence>
<proteinExistence type="evidence at protein level"/>
<feature type="chain" id="PRO_0000443486" description="Na(+)-translocating ferredoxin:NAD(+) oxidoreductase complex subunit C">
    <location>
        <begin position="1"/>
        <end position="443"/>
    </location>
</feature>
<feature type="domain" description="4Fe-4S ferredoxin-type 1" evidence="1">
    <location>
        <begin position="359"/>
        <end position="391"/>
    </location>
</feature>
<feature type="domain" description="4Fe-4S ferredoxin-type 2" evidence="1">
    <location>
        <begin position="398"/>
        <end position="428"/>
    </location>
</feature>
<feature type="binding site" evidence="1">
    <location>
        <position position="369"/>
    </location>
    <ligand>
        <name>[4Fe-4S] cluster</name>
        <dbReference type="ChEBI" id="CHEBI:49883"/>
        <label>1</label>
    </ligand>
</feature>
<feature type="binding site" evidence="1">
    <location>
        <position position="372"/>
    </location>
    <ligand>
        <name>[4Fe-4S] cluster</name>
        <dbReference type="ChEBI" id="CHEBI:49883"/>
        <label>1</label>
    </ligand>
</feature>
<feature type="binding site" evidence="1">
    <location>
        <position position="375"/>
    </location>
    <ligand>
        <name>[4Fe-4S] cluster</name>
        <dbReference type="ChEBI" id="CHEBI:49883"/>
        <label>1</label>
    </ligand>
</feature>
<feature type="binding site" evidence="1">
    <location>
        <position position="379"/>
    </location>
    <ligand>
        <name>[4Fe-4S] cluster</name>
        <dbReference type="ChEBI" id="CHEBI:49883"/>
        <label>2</label>
    </ligand>
</feature>
<feature type="binding site" evidence="1">
    <location>
        <position position="408"/>
    </location>
    <ligand>
        <name>[4Fe-4S] cluster</name>
        <dbReference type="ChEBI" id="CHEBI:49883"/>
        <label>2</label>
    </ligand>
</feature>
<feature type="binding site" evidence="1">
    <location>
        <position position="411"/>
    </location>
    <ligand>
        <name>[4Fe-4S] cluster</name>
        <dbReference type="ChEBI" id="CHEBI:49883"/>
        <label>2</label>
    </ligand>
</feature>
<feature type="binding site" evidence="1">
    <location>
        <position position="414"/>
    </location>
    <ligand>
        <name>[4Fe-4S] cluster</name>
        <dbReference type="ChEBI" id="CHEBI:49883"/>
        <label>2</label>
    </ligand>
</feature>
<feature type="binding site" evidence="1">
    <location>
        <position position="418"/>
    </location>
    <ligand>
        <name>[4Fe-4S] cluster</name>
        <dbReference type="ChEBI" id="CHEBI:49883"/>
        <label>1</label>
    </ligand>
</feature>
<organism>
    <name type="scientific">Acetobacterium woodii (strain ATCC 29683 / DSM 1030 / JCM 2381 / KCTC 1655 / WB1)</name>
    <dbReference type="NCBI Taxonomy" id="931626"/>
    <lineage>
        <taxon>Bacteria</taxon>
        <taxon>Bacillati</taxon>
        <taxon>Bacillota</taxon>
        <taxon>Clostridia</taxon>
        <taxon>Eubacteriales</taxon>
        <taxon>Eubacteriaceae</taxon>
        <taxon>Acetobacterium</taxon>
    </lineage>
</organism>
<keyword id="KW-0002">3D-structure</keyword>
<keyword id="KW-0004">4Fe-4S</keyword>
<keyword id="KW-1003">Cell membrane</keyword>
<keyword id="KW-0903">Direct protein sequencing</keyword>
<keyword id="KW-0249">Electron transport</keyword>
<keyword id="KW-0408">Iron</keyword>
<keyword id="KW-0411">Iron-sulfur</keyword>
<keyword id="KW-0472">Membrane</keyword>
<keyword id="KW-0479">Metal-binding</keyword>
<keyword id="KW-0520">NAD</keyword>
<keyword id="KW-1185">Reference proteome</keyword>
<keyword id="KW-0677">Repeat</keyword>
<keyword id="KW-1278">Translocase</keyword>
<keyword id="KW-0813">Transport</keyword>
<name>RNFC_ACEWD</name>
<comment type="function">
    <text evidence="3 4">Part of a membrane-bound complex that couples electron transfer with translocation of ions across the membrane. Couples electron transfer from reduced ferredoxin to NAD(+) with electrogenic movement of Na(+) out of the cell. Involved in caffeate respiration.</text>
</comment>
<comment type="catalytic activity">
    <reaction evidence="3 4">
        <text>2 reduced [2Fe-2S]-[ferredoxin] + Na(+)(in) + NAD(+) + H(+) = 2 oxidized [2Fe-2S]-[ferredoxin] + Na(+)(out) + NADH</text>
        <dbReference type="Rhea" id="RHEA:46800"/>
        <dbReference type="Rhea" id="RHEA-COMP:10000"/>
        <dbReference type="Rhea" id="RHEA-COMP:10001"/>
        <dbReference type="ChEBI" id="CHEBI:15378"/>
        <dbReference type="ChEBI" id="CHEBI:29101"/>
        <dbReference type="ChEBI" id="CHEBI:33737"/>
        <dbReference type="ChEBI" id="CHEBI:33738"/>
        <dbReference type="ChEBI" id="CHEBI:57540"/>
        <dbReference type="ChEBI" id="CHEBI:57945"/>
        <dbReference type="EC" id="7.2.1.2"/>
    </reaction>
</comment>
<comment type="cofactor">
    <cofactor evidence="1">
        <name>[4Fe-4S] cluster</name>
        <dbReference type="ChEBI" id="CHEBI:49883"/>
    </cofactor>
    <text evidence="1">Binds 2 [4Fe-4S] clusters per subunit.</text>
</comment>
<comment type="subunit">
    <text evidence="1 7">The complex is composed of six subunits: RnfA, RnfB, RnfC, RnfD, RnfE and RnfG.</text>
</comment>
<comment type="subcellular location">
    <subcellularLocation>
        <location evidence="1 2">Cell membrane</location>
        <topology evidence="1">Peripheral membrane protein</topology>
    </subcellularLocation>
</comment>
<comment type="similarity">
    <text evidence="1">Belongs to the 4Fe4S bacterial-type ferredoxin family. RnfC subfamily.</text>
</comment>
<reference key="1">
    <citation type="journal article" date="2007" name="J. Bacteriol.">
        <title>Dissection of the caffeate respiratory chain in the acetogen Acetobacterium woodii: identification of an Rnf-type NADH dehydrogenase as a potential coupling site.</title>
        <authorList>
            <person name="Imkamp F."/>
            <person name="Biegel E."/>
            <person name="Jayamani E."/>
            <person name="Buckel W."/>
            <person name="Muller V."/>
        </authorList>
    </citation>
    <scope>NUCLEOTIDE SEQUENCE [GENOMIC DNA]</scope>
    <source>
        <strain>ATCC 29683 / DSM 1030 / JCM 2381 / KCTC 1655 / WB1</strain>
    </source>
</reference>
<reference key="2">
    <citation type="journal article" date="2009" name="Environ. Microbiol.">
        <title>Genetic, immunological and biochemical evidence for a Rnf complex in the acetogen Acetobacterium woodii.</title>
        <authorList>
            <person name="Biegel E."/>
            <person name="Schmidt S."/>
            <person name="Muller V."/>
        </authorList>
    </citation>
    <scope>NUCLEOTIDE SEQUENCE [GENOMIC DNA]</scope>
    <scope>PROTEIN SEQUENCE OF 130-144</scope>
    <scope>SUBCELLULAR LOCATION</scope>
    <source>
        <strain>ATCC 29683 / DSM 1030 / JCM 2381 / KCTC 1655 / WB1</strain>
    </source>
</reference>
<reference key="3">
    <citation type="submission" date="2011-07" db="EMBL/GenBank/DDBJ databases">
        <title>Complete genome sequence of Acetobacterium woodii.</title>
        <authorList>
            <person name="Poehlein A."/>
            <person name="Schmidt S."/>
            <person name="Kaster A.-K."/>
            <person name="Goenrich M."/>
            <person name="Vollmers J."/>
            <person name="Thuermer A."/>
            <person name="Gottschalk G."/>
            <person name="Thauer R.K."/>
            <person name="Daniel R."/>
            <person name="Mueller V."/>
        </authorList>
    </citation>
    <scope>NUCLEOTIDE SEQUENCE [LARGE SCALE GENOMIC DNA]</scope>
    <source>
        <strain>ATCC 29683 / DSM 1030 / JCM 2381 / KCTC 1655 / WB1</strain>
    </source>
</reference>
<reference key="4">
    <citation type="journal article" date="2010" name="Proc. Natl. Acad. Sci. U.S.A.">
        <title>Bacterial Na+-translocating ferredoxin:NAD+ oxidoreductase.</title>
        <authorList>
            <person name="Biegel E."/>
            <person name="Mueller V."/>
        </authorList>
    </citation>
    <scope>FUNCTION</scope>
    <scope>CATALYTIC ACTIVITY</scope>
    <scope>SUBUNIT</scope>
    <source>
        <strain>ATCC 29683 / DSM 1030 / JCM 2381 / KCTC 1655 / WB1</strain>
    </source>
</reference>
<reference key="5">
    <citation type="journal article" date="2013" name="J. Biol. Chem.">
        <title>The ferredoxin:NAD+ oxidoreductase (Rnf) from the acetogen Acetobacterium woodii requires Na+ and is reversibly coupled to the membrane potential.</title>
        <authorList>
            <person name="Hess V."/>
            <person name="Schuchmann K."/>
            <person name="Mueller V."/>
        </authorList>
    </citation>
    <scope>FUNCTION</scope>
    <scope>CATALYTIC ACTIVITY</scope>
    <source>
        <strain>ATCC 29683 / DSM 1030 / JCM 2381 / KCTC 1655 / WB1</strain>
    </source>
</reference>
<accession>H6LC32</accession>
<accession>C4N8U0</accession>
<gene>
    <name evidence="1 5" type="primary">rnfC</name>
    <name evidence="8" type="ordered locus">Awo_c22060</name>
</gene>